<name>CLPX_PARP8</name>
<feature type="chain" id="PRO_1000097931" description="ATP-dependent Clp protease ATP-binding subunit ClpX">
    <location>
        <begin position="1"/>
        <end position="423"/>
    </location>
</feature>
<feature type="domain" description="ClpX-type ZB" evidence="2">
    <location>
        <begin position="3"/>
        <end position="56"/>
    </location>
</feature>
<feature type="binding site" evidence="2">
    <location>
        <position position="15"/>
    </location>
    <ligand>
        <name>Zn(2+)</name>
        <dbReference type="ChEBI" id="CHEBI:29105"/>
    </ligand>
</feature>
<feature type="binding site" evidence="2">
    <location>
        <position position="18"/>
    </location>
    <ligand>
        <name>Zn(2+)</name>
        <dbReference type="ChEBI" id="CHEBI:29105"/>
    </ligand>
</feature>
<feature type="binding site" evidence="2">
    <location>
        <position position="37"/>
    </location>
    <ligand>
        <name>Zn(2+)</name>
        <dbReference type="ChEBI" id="CHEBI:29105"/>
    </ligand>
</feature>
<feature type="binding site" evidence="2">
    <location>
        <position position="40"/>
    </location>
    <ligand>
        <name>Zn(2+)</name>
        <dbReference type="ChEBI" id="CHEBI:29105"/>
    </ligand>
</feature>
<feature type="binding site" evidence="1">
    <location>
        <begin position="122"/>
        <end position="129"/>
    </location>
    <ligand>
        <name>ATP</name>
        <dbReference type="ChEBI" id="CHEBI:30616"/>
    </ligand>
</feature>
<comment type="function">
    <text evidence="1">ATP-dependent specificity component of the Clp protease. It directs the protease to specific substrates. Can perform chaperone functions in the absence of ClpP.</text>
</comment>
<comment type="subunit">
    <text evidence="1">Component of the ClpX-ClpP complex. Forms a hexameric ring that, in the presence of ATP, binds to fourteen ClpP subunits assembled into a disk-like structure with a central cavity, resembling the structure of eukaryotic proteasomes.</text>
</comment>
<comment type="similarity">
    <text evidence="1">Belongs to the ClpX chaperone family.</text>
</comment>
<dbReference type="EMBL" id="CP001043">
    <property type="protein sequence ID" value="ACC70201.1"/>
    <property type="molecule type" value="Genomic_DNA"/>
</dbReference>
<dbReference type="RefSeq" id="WP_012400416.1">
    <property type="nucleotide sequence ID" value="NC_010622.1"/>
</dbReference>
<dbReference type="SMR" id="B2JGL6"/>
<dbReference type="STRING" id="391038.Bphy_1012"/>
<dbReference type="KEGG" id="bph:Bphy_1012"/>
<dbReference type="eggNOG" id="COG1219">
    <property type="taxonomic scope" value="Bacteria"/>
</dbReference>
<dbReference type="HOGENOM" id="CLU_014218_8_2_4"/>
<dbReference type="OrthoDB" id="9804062at2"/>
<dbReference type="Proteomes" id="UP000001192">
    <property type="component" value="Chromosome 1"/>
</dbReference>
<dbReference type="GO" id="GO:0009376">
    <property type="term" value="C:HslUV protease complex"/>
    <property type="evidence" value="ECO:0007669"/>
    <property type="project" value="TreeGrafter"/>
</dbReference>
<dbReference type="GO" id="GO:0005524">
    <property type="term" value="F:ATP binding"/>
    <property type="evidence" value="ECO:0007669"/>
    <property type="project" value="UniProtKB-UniRule"/>
</dbReference>
<dbReference type="GO" id="GO:0016887">
    <property type="term" value="F:ATP hydrolysis activity"/>
    <property type="evidence" value="ECO:0007669"/>
    <property type="project" value="InterPro"/>
</dbReference>
<dbReference type="GO" id="GO:0140662">
    <property type="term" value="F:ATP-dependent protein folding chaperone"/>
    <property type="evidence" value="ECO:0007669"/>
    <property type="project" value="InterPro"/>
</dbReference>
<dbReference type="GO" id="GO:0046983">
    <property type="term" value="F:protein dimerization activity"/>
    <property type="evidence" value="ECO:0007669"/>
    <property type="project" value="InterPro"/>
</dbReference>
<dbReference type="GO" id="GO:0051082">
    <property type="term" value="F:unfolded protein binding"/>
    <property type="evidence" value="ECO:0007669"/>
    <property type="project" value="UniProtKB-UniRule"/>
</dbReference>
<dbReference type="GO" id="GO:0008270">
    <property type="term" value="F:zinc ion binding"/>
    <property type="evidence" value="ECO:0007669"/>
    <property type="project" value="InterPro"/>
</dbReference>
<dbReference type="GO" id="GO:0051301">
    <property type="term" value="P:cell division"/>
    <property type="evidence" value="ECO:0007669"/>
    <property type="project" value="TreeGrafter"/>
</dbReference>
<dbReference type="GO" id="GO:0051603">
    <property type="term" value="P:proteolysis involved in protein catabolic process"/>
    <property type="evidence" value="ECO:0007669"/>
    <property type="project" value="TreeGrafter"/>
</dbReference>
<dbReference type="CDD" id="cd19497">
    <property type="entry name" value="RecA-like_ClpX"/>
    <property type="match status" value="1"/>
</dbReference>
<dbReference type="FunFam" id="1.10.8.60:FF:000002">
    <property type="entry name" value="ATP-dependent Clp protease ATP-binding subunit ClpX"/>
    <property type="match status" value="1"/>
</dbReference>
<dbReference type="FunFam" id="3.40.50.300:FF:000005">
    <property type="entry name" value="ATP-dependent Clp protease ATP-binding subunit ClpX"/>
    <property type="match status" value="1"/>
</dbReference>
<dbReference type="Gene3D" id="1.10.8.60">
    <property type="match status" value="1"/>
</dbReference>
<dbReference type="Gene3D" id="6.20.220.10">
    <property type="entry name" value="ClpX chaperone, C4-type zinc finger domain"/>
    <property type="match status" value="1"/>
</dbReference>
<dbReference type="Gene3D" id="3.40.50.300">
    <property type="entry name" value="P-loop containing nucleotide triphosphate hydrolases"/>
    <property type="match status" value="1"/>
</dbReference>
<dbReference type="HAMAP" id="MF_00175">
    <property type="entry name" value="ClpX"/>
    <property type="match status" value="1"/>
</dbReference>
<dbReference type="InterPro" id="IPR003593">
    <property type="entry name" value="AAA+_ATPase"/>
</dbReference>
<dbReference type="InterPro" id="IPR050052">
    <property type="entry name" value="ATP-dep_Clp_protease_ClpX"/>
</dbReference>
<dbReference type="InterPro" id="IPR003959">
    <property type="entry name" value="ATPase_AAA_core"/>
</dbReference>
<dbReference type="InterPro" id="IPR019489">
    <property type="entry name" value="Clp_ATPase_C"/>
</dbReference>
<dbReference type="InterPro" id="IPR004487">
    <property type="entry name" value="Clp_protease_ATP-bd_su_ClpX"/>
</dbReference>
<dbReference type="InterPro" id="IPR046425">
    <property type="entry name" value="ClpX_bact"/>
</dbReference>
<dbReference type="InterPro" id="IPR027417">
    <property type="entry name" value="P-loop_NTPase"/>
</dbReference>
<dbReference type="InterPro" id="IPR010603">
    <property type="entry name" value="Znf_CppX_C4"/>
</dbReference>
<dbReference type="InterPro" id="IPR038366">
    <property type="entry name" value="Znf_CppX_C4_sf"/>
</dbReference>
<dbReference type="NCBIfam" id="TIGR00382">
    <property type="entry name" value="clpX"/>
    <property type="match status" value="1"/>
</dbReference>
<dbReference type="NCBIfam" id="NF003745">
    <property type="entry name" value="PRK05342.1"/>
    <property type="match status" value="1"/>
</dbReference>
<dbReference type="PANTHER" id="PTHR48102:SF7">
    <property type="entry name" value="ATP-DEPENDENT CLP PROTEASE ATP-BINDING SUBUNIT CLPX-LIKE, MITOCHONDRIAL"/>
    <property type="match status" value="1"/>
</dbReference>
<dbReference type="PANTHER" id="PTHR48102">
    <property type="entry name" value="ATP-DEPENDENT CLP PROTEASE ATP-BINDING SUBUNIT CLPX-LIKE, MITOCHONDRIAL-RELATED"/>
    <property type="match status" value="1"/>
</dbReference>
<dbReference type="Pfam" id="PF07724">
    <property type="entry name" value="AAA_2"/>
    <property type="match status" value="1"/>
</dbReference>
<dbReference type="Pfam" id="PF10431">
    <property type="entry name" value="ClpB_D2-small"/>
    <property type="match status" value="1"/>
</dbReference>
<dbReference type="Pfam" id="PF06689">
    <property type="entry name" value="zf-C4_ClpX"/>
    <property type="match status" value="1"/>
</dbReference>
<dbReference type="SMART" id="SM00382">
    <property type="entry name" value="AAA"/>
    <property type="match status" value="1"/>
</dbReference>
<dbReference type="SMART" id="SM01086">
    <property type="entry name" value="ClpB_D2-small"/>
    <property type="match status" value="1"/>
</dbReference>
<dbReference type="SMART" id="SM00994">
    <property type="entry name" value="zf-C4_ClpX"/>
    <property type="match status" value="1"/>
</dbReference>
<dbReference type="SUPFAM" id="SSF57716">
    <property type="entry name" value="Glucocorticoid receptor-like (DNA-binding domain)"/>
    <property type="match status" value="1"/>
</dbReference>
<dbReference type="SUPFAM" id="SSF52540">
    <property type="entry name" value="P-loop containing nucleoside triphosphate hydrolases"/>
    <property type="match status" value="1"/>
</dbReference>
<dbReference type="PROSITE" id="PS51902">
    <property type="entry name" value="CLPX_ZB"/>
    <property type="match status" value="1"/>
</dbReference>
<accession>B2JGL6</accession>
<organism>
    <name type="scientific">Paraburkholderia phymatum (strain DSM 17167 / CIP 108236 / LMG 21445 / STM815)</name>
    <name type="common">Burkholderia phymatum</name>
    <dbReference type="NCBI Taxonomy" id="391038"/>
    <lineage>
        <taxon>Bacteria</taxon>
        <taxon>Pseudomonadati</taxon>
        <taxon>Pseudomonadota</taxon>
        <taxon>Betaproteobacteria</taxon>
        <taxon>Burkholderiales</taxon>
        <taxon>Burkholderiaceae</taxon>
        <taxon>Paraburkholderia</taxon>
    </lineage>
</organism>
<protein>
    <recommendedName>
        <fullName evidence="1">ATP-dependent Clp protease ATP-binding subunit ClpX</fullName>
    </recommendedName>
</protein>
<proteinExistence type="inferred from homology"/>
<gene>
    <name evidence="1" type="primary">clpX</name>
    <name type="ordered locus">Bphy_1012</name>
</gene>
<evidence type="ECO:0000255" key="1">
    <source>
        <dbReference type="HAMAP-Rule" id="MF_00175"/>
    </source>
</evidence>
<evidence type="ECO:0000255" key="2">
    <source>
        <dbReference type="PROSITE-ProRule" id="PRU01250"/>
    </source>
</evidence>
<sequence length="423" mass="46372">MADKKGSNSEKLLYCSFCGKSQHEVKKLIAGPSVFICDECIDLCNEIIRDEAAGAGLETGLSKSDLPSPQEIRDILDQYVIGQERAKKILAVAVYNHYKRLKHLDKKDDVELSKSNILLIGPTGSGKTLLAQTLARLLNVPFVIADATTLTEAGYVGEDVENIIQKLLQNCNYEVDKAQRGIVYIDEIDKISRKSDNPSITRDVSGEGVQQALLKLVEGTMASVPPQGGRKHPNQDFIQVDTTNILFICGGAFDGLEKVIVDRTEKTGIGFGASVKSKQDRDAGEVLREVEPEDLIKFGLIPELIGRLPVVATLGKLDETALMKILVEPKNALVKQYHKLFNMERVELEIRPAALQAIARKAIRRKTGARGLRSILEQALLDVMYELPAMKGVSKVIIDDNVIDGDGKPLLIYEDAPKVAGSN</sequence>
<keyword id="KW-0067">ATP-binding</keyword>
<keyword id="KW-0143">Chaperone</keyword>
<keyword id="KW-0479">Metal-binding</keyword>
<keyword id="KW-0547">Nucleotide-binding</keyword>
<keyword id="KW-1185">Reference proteome</keyword>
<keyword id="KW-0862">Zinc</keyword>
<reference key="1">
    <citation type="journal article" date="2014" name="Stand. Genomic Sci.">
        <title>Complete genome sequence of Burkholderia phymatum STM815(T), a broad host range and efficient nitrogen-fixing symbiont of Mimosa species.</title>
        <authorList>
            <person name="Moulin L."/>
            <person name="Klonowska A."/>
            <person name="Caroline B."/>
            <person name="Booth K."/>
            <person name="Vriezen J.A."/>
            <person name="Melkonian R."/>
            <person name="James E.K."/>
            <person name="Young J.P."/>
            <person name="Bena G."/>
            <person name="Hauser L."/>
            <person name="Land M."/>
            <person name="Kyrpides N."/>
            <person name="Bruce D."/>
            <person name="Chain P."/>
            <person name="Copeland A."/>
            <person name="Pitluck S."/>
            <person name="Woyke T."/>
            <person name="Lizotte-Waniewski M."/>
            <person name="Bristow J."/>
            <person name="Riley M."/>
        </authorList>
    </citation>
    <scope>NUCLEOTIDE SEQUENCE [LARGE SCALE GENOMIC DNA]</scope>
    <source>
        <strain>DSM 17167 / CIP 108236 / LMG 21445 / STM815</strain>
    </source>
</reference>